<dbReference type="EMBL" id="CP000851">
    <property type="protein sequence ID" value="ABV85522.1"/>
    <property type="molecule type" value="Genomic_DNA"/>
</dbReference>
<dbReference type="RefSeq" id="WP_012153464.1">
    <property type="nucleotide sequence ID" value="NC_009901.1"/>
</dbReference>
<dbReference type="SMR" id="A8GYY5"/>
<dbReference type="STRING" id="398579.Spea_0193"/>
<dbReference type="KEGG" id="spl:Spea_0193"/>
<dbReference type="eggNOG" id="COG0186">
    <property type="taxonomic scope" value="Bacteria"/>
</dbReference>
<dbReference type="HOGENOM" id="CLU_073626_1_1_6"/>
<dbReference type="OrthoDB" id="9811714at2"/>
<dbReference type="Proteomes" id="UP000002608">
    <property type="component" value="Chromosome"/>
</dbReference>
<dbReference type="GO" id="GO:0022627">
    <property type="term" value="C:cytosolic small ribosomal subunit"/>
    <property type="evidence" value="ECO:0007669"/>
    <property type="project" value="TreeGrafter"/>
</dbReference>
<dbReference type="GO" id="GO:0019843">
    <property type="term" value="F:rRNA binding"/>
    <property type="evidence" value="ECO:0007669"/>
    <property type="project" value="UniProtKB-UniRule"/>
</dbReference>
<dbReference type="GO" id="GO:0003735">
    <property type="term" value="F:structural constituent of ribosome"/>
    <property type="evidence" value="ECO:0007669"/>
    <property type="project" value="InterPro"/>
</dbReference>
<dbReference type="GO" id="GO:0006412">
    <property type="term" value="P:translation"/>
    <property type="evidence" value="ECO:0007669"/>
    <property type="project" value="UniProtKB-UniRule"/>
</dbReference>
<dbReference type="CDD" id="cd00364">
    <property type="entry name" value="Ribosomal_uS17"/>
    <property type="match status" value="1"/>
</dbReference>
<dbReference type="FunFam" id="2.40.50.140:FF:000014">
    <property type="entry name" value="30S ribosomal protein S17"/>
    <property type="match status" value="1"/>
</dbReference>
<dbReference type="Gene3D" id="2.40.50.140">
    <property type="entry name" value="Nucleic acid-binding proteins"/>
    <property type="match status" value="1"/>
</dbReference>
<dbReference type="HAMAP" id="MF_01345_B">
    <property type="entry name" value="Ribosomal_uS17_B"/>
    <property type="match status" value="1"/>
</dbReference>
<dbReference type="InterPro" id="IPR012340">
    <property type="entry name" value="NA-bd_OB-fold"/>
</dbReference>
<dbReference type="InterPro" id="IPR000266">
    <property type="entry name" value="Ribosomal_uS17"/>
</dbReference>
<dbReference type="InterPro" id="IPR019984">
    <property type="entry name" value="Ribosomal_uS17_bact/chlr"/>
</dbReference>
<dbReference type="InterPro" id="IPR019979">
    <property type="entry name" value="Ribosomal_uS17_CS"/>
</dbReference>
<dbReference type="NCBIfam" id="NF004123">
    <property type="entry name" value="PRK05610.1"/>
    <property type="match status" value="1"/>
</dbReference>
<dbReference type="NCBIfam" id="TIGR03635">
    <property type="entry name" value="uS17_bact"/>
    <property type="match status" value="1"/>
</dbReference>
<dbReference type="PANTHER" id="PTHR10744">
    <property type="entry name" value="40S RIBOSOMAL PROTEIN S11 FAMILY MEMBER"/>
    <property type="match status" value="1"/>
</dbReference>
<dbReference type="PANTHER" id="PTHR10744:SF1">
    <property type="entry name" value="SMALL RIBOSOMAL SUBUNIT PROTEIN US17M"/>
    <property type="match status" value="1"/>
</dbReference>
<dbReference type="Pfam" id="PF00366">
    <property type="entry name" value="Ribosomal_S17"/>
    <property type="match status" value="1"/>
</dbReference>
<dbReference type="PRINTS" id="PR00973">
    <property type="entry name" value="RIBOSOMALS17"/>
</dbReference>
<dbReference type="SUPFAM" id="SSF50249">
    <property type="entry name" value="Nucleic acid-binding proteins"/>
    <property type="match status" value="1"/>
</dbReference>
<dbReference type="PROSITE" id="PS00056">
    <property type="entry name" value="RIBOSOMAL_S17"/>
    <property type="match status" value="1"/>
</dbReference>
<feature type="chain" id="PRO_1000086858" description="Small ribosomal subunit protein uS17">
    <location>
        <begin position="1"/>
        <end position="82"/>
    </location>
</feature>
<gene>
    <name evidence="1" type="primary">rpsQ</name>
    <name type="ordered locus">Spea_0193</name>
</gene>
<proteinExistence type="inferred from homology"/>
<organism>
    <name type="scientific">Shewanella pealeana (strain ATCC 700345 / ANG-SQ1)</name>
    <dbReference type="NCBI Taxonomy" id="398579"/>
    <lineage>
        <taxon>Bacteria</taxon>
        <taxon>Pseudomonadati</taxon>
        <taxon>Pseudomonadota</taxon>
        <taxon>Gammaproteobacteria</taxon>
        <taxon>Alteromonadales</taxon>
        <taxon>Shewanellaceae</taxon>
        <taxon>Shewanella</taxon>
    </lineage>
</organism>
<protein>
    <recommendedName>
        <fullName evidence="1">Small ribosomal subunit protein uS17</fullName>
    </recommendedName>
    <alternativeName>
        <fullName evidence="2">30S ribosomal protein S17</fullName>
    </alternativeName>
</protein>
<name>RS17_SHEPA</name>
<sequence>MSDTIRTLQGRVLSDKMDKSITVAIERKVKHPLYGKFIKRTTKIHAHDEQNQCNAGDIVTIRECRPLSKTKSWTLVEVVTKA</sequence>
<evidence type="ECO:0000255" key="1">
    <source>
        <dbReference type="HAMAP-Rule" id="MF_01345"/>
    </source>
</evidence>
<evidence type="ECO:0000305" key="2"/>
<accession>A8GYY5</accession>
<comment type="function">
    <text evidence="1">One of the primary rRNA binding proteins, it binds specifically to the 5'-end of 16S ribosomal RNA.</text>
</comment>
<comment type="subunit">
    <text evidence="1">Part of the 30S ribosomal subunit.</text>
</comment>
<comment type="similarity">
    <text evidence="1">Belongs to the universal ribosomal protein uS17 family.</text>
</comment>
<reference key="1">
    <citation type="submission" date="2007-10" db="EMBL/GenBank/DDBJ databases">
        <title>Complete sequence of Shewanella pealeana ATCC 700345.</title>
        <authorList>
            <consortium name="US DOE Joint Genome Institute"/>
            <person name="Copeland A."/>
            <person name="Lucas S."/>
            <person name="Lapidus A."/>
            <person name="Barry K."/>
            <person name="Glavina del Rio T."/>
            <person name="Dalin E."/>
            <person name="Tice H."/>
            <person name="Pitluck S."/>
            <person name="Chertkov O."/>
            <person name="Brettin T."/>
            <person name="Bruce D."/>
            <person name="Detter J.C."/>
            <person name="Han C."/>
            <person name="Schmutz J."/>
            <person name="Larimer F."/>
            <person name="Land M."/>
            <person name="Hauser L."/>
            <person name="Kyrpides N."/>
            <person name="Kim E."/>
            <person name="Zhao J.-S.Z."/>
            <person name="Manno D."/>
            <person name="Hawari J."/>
            <person name="Richardson P."/>
        </authorList>
    </citation>
    <scope>NUCLEOTIDE SEQUENCE [LARGE SCALE GENOMIC DNA]</scope>
    <source>
        <strain>ATCC 700345 / ANG-SQ1</strain>
    </source>
</reference>
<keyword id="KW-1185">Reference proteome</keyword>
<keyword id="KW-0687">Ribonucleoprotein</keyword>
<keyword id="KW-0689">Ribosomal protein</keyword>
<keyword id="KW-0694">RNA-binding</keyword>
<keyword id="KW-0699">rRNA-binding</keyword>